<accession>B5BCD9</accession>
<protein>
    <recommendedName>
        <fullName evidence="1">Pyrimidine-specific ribonucleoside hydrolase RihA</fullName>
        <ecNumber evidence="1">3.2.-.-</ecNumber>
    </recommendedName>
    <alternativeName>
        <fullName evidence="1">Cytidine/uridine-specific hydrolase</fullName>
    </alternativeName>
</protein>
<dbReference type="EC" id="3.2.-.-" evidence="1"/>
<dbReference type="EMBL" id="FM200053">
    <property type="protein sequence ID" value="CAR60132.1"/>
    <property type="molecule type" value="Genomic_DNA"/>
</dbReference>
<dbReference type="RefSeq" id="WP_001207427.1">
    <property type="nucleotide sequence ID" value="NC_011147.1"/>
</dbReference>
<dbReference type="SMR" id="B5BCD9"/>
<dbReference type="KEGG" id="sek:SSPA1931"/>
<dbReference type="HOGENOM" id="CLU_036838_2_0_6"/>
<dbReference type="Proteomes" id="UP000001869">
    <property type="component" value="Chromosome"/>
</dbReference>
<dbReference type="GO" id="GO:0005829">
    <property type="term" value="C:cytosol"/>
    <property type="evidence" value="ECO:0007669"/>
    <property type="project" value="TreeGrafter"/>
</dbReference>
<dbReference type="GO" id="GO:0008477">
    <property type="term" value="F:purine nucleosidase activity"/>
    <property type="evidence" value="ECO:0007669"/>
    <property type="project" value="TreeGrafter"/>
</dbReference>
<dbReference type="GO" id="GO:0045437">
    <property type="term" value="F:uridine nucleosidase activity"/>
    <property type="evidence" value="ECO:0007669"/>
    <property type="project" value="InterPro"/>
</dbReference>
<dbReference type="GO" id="GO:0015949">
    <property type="term" value="P:nucleobase-containing small molecule interconversion"/>
    <property type="evidence" value="ECO:0007669"/>
    <property type="project" value="InterPro"/>
</dbReference>
<dbReference type="GO" id="GO:0006152">
    <property type="term" value="P:purine nucleoside catabolic process"/>
    <property type="evidence" value="ECO:0007669"/>
    <property type="project" value="TreeGrafter"/>
</dbReference>
<dbReference type="GO" id="GO:0006206">
    <property type="term" value="P:pyrimidine nucleobase metabolic process"/>
    <property type="evidence" value="ECO:0007669"/>
    <property type="project" value="UniProtKB-UniRule"/>
</dbReference>
<dbReference type="CDD" id="cd02651">
    <property type="entry name" value="nuc_hydro_IU_UC_XIUA"/>
    <property type="match status" value="1"/>
</dbReference>
<dbReference type="FunFam" id="3.90.245.10:FF:000001">
    <property type="entry name" value="Pyrimidine-specific ribonucleoside hydrolase RihA"/>
    <property type="match status" value="1"/>
</dbReference>
<dbReference type="Gene3D" id="3.90.245.10">
    <property type="entry name" value="Ribonucleoside hydrolase-like"/>
    <property type="match status" value="1"/>
</dbReference>
<dbReference type="HAMAP" id="MF_01431">
    <property type="entry name" value="Pyrim_hydro_RihA"/>
    <property type="match status" value="1"/>
</dbReference>
<dbReference type="InterPro" id="IPR015910">
    <property type="entry name" value="I/U_nuclsd_hydro_CS"/>
</dbReference>
<dbReference type="InterPro" id="IPR001910">
    <property type="entry name" value="Inosine/uridine_hydrolase_dom"/>
</dbReference>
<dbReference type="InterPro" id="IPR023186">
    <property type="entry name" value="IUNH"/>
</dbReference>
<dbReference type="InterPro" id="IPR022975">
    <property type="entry name" value="Pyrim_hydro_RihA"/>
</dbReference>
<dbReference type="InterPro" id="IPR036452">
    <property type="entry name" value="Ribo_hydro-like"/>
</dbReference>
<dbReference type="NCBIfam" id="NF007761">
    <property type="entry name" value="PRK10443.1"/>
    <property type="match status" value="1"/>
</dbReference>
<dbReference type="PANTHER" id="PTHR12304">
    <property type="entry name" value="INOSINE-URIDINE PREFERRING NUCLEOSIDE HYDROLASE"/>
    <property type="match status" value="1"/>
</dbReference>
<dbReference type="PANTHER" id="PTHR12304:SF4">
    <property type="entry name" value="URIDINE NUCLEOSIDASE"/>
    <property type="match status" value="1"/>
</dbReference>
<dbReference type="Pfam" id="PF01156">
    <property type="entry name" value="IU_nuc_hydro"/>
    <property type="match status" value="1"/>
</dbReference>
<dbReference type="SUPFAM" id="SSF53590">
    <property type="entry name" value="Nucleoside hydrolase"/>
    <property type="match status" value="1"/>
</dbReference>
<dbReference type="PROSITE" id="PS01247">
    <property type="entry name" value="IUNH"/>
    <property type="match status" value="1"/>
</dbReference>
<gene>
    <name evidence="1" type="primary">rihA</name>
    <name type="ordered locus">SSPA1931</name>
</gene>
<organism>
    <name type="scientific">Salmonella paratyphi A (strain AKU_12601)</name>
    <dbReference type="NCBI Taxonomy" id="554290"/>
    <lineage>
        <taxon>Bacteria</taxon>
        <taxon>Pseudomonadati</taxon>
        <taxon>Pseudomonadota</taxon>
        <taxon>Gammaproteobacteria</taxon>
        <taxon>Enterobacterales</taxon>
        <taxon>Enterobacteriaceae</taxon>
        <taxon>Salmonella</taxon>
    </lineage>
</organism>
<evidence type="ECO:0000255" key="1">
    <source>
        <dbReference type="HAMAP-Rule" id="MF_01431"/>
    </source>
</evidence>
<proteinExistence type="inferred from homology"/>
<reference key="1">
    <citation type="journal article" date="2009" name="BMC Genomics">
        <title>Pseudogene accumulation in the evolutionary histories of Salmonella enterica serovars Paratyphi A and Typhi.</title>
        <authorList>
            <person name="Holt K.E."/>
            <person name="Thomson N.R."/>
            <person name="Wain J."/>
            <person name="Langridge G.C."/>
            <person name="Hasan R."/>
            <person name="Bhutta Z.A."/>
            <person name="Quail M.A."/>
            <person name="Norbertczak H."/>
            <person name="Walker D."/>
            <person name="Simmonds M."/>
            <person name="White B."/>
            <person name="Bason N."/>
            <person name="Mungall K."/>
            <person name="Dougan G."/>
            <person name="Parkhill J."/>
        </authorList>
    </citation>
    <scope>NUCLEOTIDE SEQUENCE [LARGE SCALE GENOMIC DNA]</scope>
    <source>
        <strain>AKU_12601</strain>
    </source>
</reference>
<keyword id="KW-0326">Glycosidase</keyword>
<keyword id="KW-0378">Hydrolase</keyword>
<name>RIHA_SALPK</name>
<sequence length="311" mass="33744">MALPIIIDCDPGHDDAIALVLALASPELEVKAITSSAGNQTPEKTLRNVLRMLTLLKRPDIPVAGGAVKPLMRELIIADNVHGESGLDGPALPEPSFAPQSGTAVELMAKTLRESSQPVTIVSTGPQTNVALLLNSHPELHAKIARIVIMGGAMGLGNWTPAAEFNIYVDPEAAEIVFQSGIPVVMAGLNVTHKAQIHAADIERFRAIGNPISTIVAELLDFFMEYHKDEKWGFVGAPLHDPCTIAWLLKPEIFTTVERWVGVETQGKYTQGMTVVDYYFLTGNKPNATVMVDVDRQGFVDLLAERLQYYA</sequence>
<comment type="function">
    <text evidence="1">Hydrolyzes cytidine or uridine to ribose and cytosine or uracil, respectively.</text>
</comment>
<comment type="similarity">
    <text evidence="1">Belongs to the IUNH family. RihA subfamily.</text>
</comment>
<feature type="chain" id="PRO_1000145804" description="Pyrimidine-specific ribonucleoside hydrolase RihA">
    <location>
        <begin position="1"/>
        <end position="311"/>
    </location>
</feature>
<feature type="active site" evidence="1">
    <location>
        <position position="240"/>
    </location>
</feature>